<organism>
    <name type="scientific">Methanocaldococcus jannaschii (strain ATCC 43067 / DSM 2661 / JAL-1 / JCM 10045 / NBRC 100440)</name>
    <name type="common">Methanococcus jannaschii</name>
    <dbReference type="NCBI Taxonomy" id="243232"/>
    <lineage>
        <taxon>Archaea</taxon>
        <taxon>Methanobacteriati</taxon>
        <taxon>Methanobacteriota</taxon>
        <taxon>Methanomada group</taxon>
        <taxon>Methanococci</taxon>
        <taxon>Methanococcales</taxon>
        <taxon>Methanocaldococcaceae</taxon>
        <taxon>Methanocaldococcus</taxon>
    </lineage>
</organism>
<accession>Q58531</accession>
<keyword id="KW-0002">3D-structure</keyword>
<keyword id="KW-0067">ATP-binding</keyword>
<keyword id="KW-0332">GMP biosynthesis</keyword>
<keyword id="KW-0436">Ligase</keyword>
<keyword id="KW-0547">Nucleotide-binding</keyword>
<keyword id="KW-0658">Purine biosynthesis</keyword>
<keyword id="KW-1185">Reference proteome</keyword>
<reference key="1">
    <citation type="journal article" date="1996" name="Science">
        <title>Complete genome sequence of the methanogenic archaeon, Methanococcus jannaschii.</title>
        <authorList>
            <person name="Bult C.J."/>
            <person name="White O."/>
            <person name="Olsen G.J."/>
            <person name="Zhou L."/>
            <person name="Fleischmann R.D."/>
            <person name="Sutton G.G."/>
            <person name="Blake J.A."/>
            <person name="FitzGerald L.M."/>
            <person name="Clayton R.A."/>
            <person name="Gocayne J.D."/>
            <person name="Kerlavage A.R."/>
            <person name="Dougherty B.A."/>
            <person name="Tomb J.-F."/>
            <person name="Adams M.D."/>
            <person name="Reich C.I."/>
            <person name="Overbeek R."/>
            <person name="Kirkness E.F."/>
            <person name="Weinstock K.G."/>
            <person name="Merrick J.M."/>
            <person name="Glodek A."/>
            <person name="Scott J.L."/>
            <person name="Geoghagen N.S.M."/>
            <person name="Weidman J.F."/>
            <person name="Fuhrmann J.L."/>
            <person name="Nguyen D."/>
            <person name="Utterback T.R."/>
            <person name="Kelley J.M."/>
            <person name="Peterson J.D."/>
            <person name="Sadow P.W."/>
            <person name="Hanna M.C."/>
            <person name="Cotton M.D."/>
            <person name="Roberts K.M."/>
            <person name="Hurst M.A."/>
            <person name="Kaine B.P."/>
            <person name="Borodovsky M."/>
            <person name="Klenk H.-P."/>
            <person name="Fraser C.M."/>
            <person name="Smith H.O."/>
            <person name="Woese C.R."/>
            <person name="Venter J.C."/>
        </authorList>
    </citation>
    <scope>NUCLEOTIDE SEQUENCE [LARGE SCALE GENOMIC DNA]</scope>
    <source>
        <strain>ATCC 43067 / DSM 2661 / JAL-1 / JCM 10045 / NBRC 100440</strain>
    </source>
</reference>
<comment type="function">
    <text evidence="1">Catalyzes the synthesis of GMP from XMP.</text>
</comment>
<comment type="catalytic activity">
    <reaction>
        <text>XMP + L-glutamine + ATP + H2O = GMP + L-glutamate + AMP + diphosphate + 2 H(+)</text>
        <dbReference type="Rhea" id="RHEA:11680"/>
        <dbReference type="ChEBI" id="CHEBI:15377"/>
        <dbReference type="ChEBI" id="CHEBI:15378"/>
        <dbReference type="ChEBI" id="CHEBI:29985"/>
        <dbReference type="ChEBI" id="CHEBI:30616"/>
        <dbReference type="ChEBI" id="CHEBI:33019"/>
        <dbReference type="ChEBI" id="CHEBI:57464"/>
        <dbReference type="ChEBI" id="CHEBI:58115"/>
        <dbReference type="ChEBI" id="CHEBI:58359"/>
        <dbReference type="ChEBI" id="CHEBI:456215"/>
        <dbReference type="EC" id="6.3.5.2"/>
    </reaction>
</comment>
<comment type="pathway">
    <text>Purine metabolism; GMP biosynthesis; GMP from XMP (L-Gln route): step 1/1.</text>
</comment>
<comment type="subunit">
    <text evidence="2">Heterodimer composed of a glutamine amidotransferase subunit (A) and a GMP-binding subunit (B).</text>
</comment>
<sequence>MFDPKKFIDEAVEEIKQQISDRKAIIALSGGVDSSVAAVLTHKAIGDKLTAVFVDTGLMRKGEREEVEKTFRDKLGLNLIVVDAKDRFLNALKGVTDPEEKRKIIGKLFIDVFEEIAEDIKAEVLVQGTIAPDWIETQGKIKSHHNVALPHGMVLEVVEPLRELYKDEVRLLAKELGLPDSIVYRQPFPGPGLAVRVLGEVTEEKLNICREANAIVEEEVKKANLDKDLWQYFAVVLDCKATGVKGDEREYNWIVALRMVKSLDAMTAHVPEIPFDLLKRISKRITSEIPNVARVVFDITDKPPATIEFE</sequence>
<dbReference type="EC" id="6.3.5.2"/>
<dbReference type="EMBL" id="L77117">
    <property type="protein sequence ID" value="AAB99133.1"/>
    <property type="molecule type" value="Genomic_DNA"/>
</dbReference>
<dbReference type="PIR" id="B64441">
    <property type="entry name" value="B64441"/>
</dbReference>
<dbReference type="RefSeq" id="WP_010870642.1">
    <property type="nucleotide sequence ID" value="NC_000909.1"/>
</dbReference>
<dbReference type="PDB" id="6JP9">
    <property type="method" value="X-ray"/>
    <property type="resolution" value="2.10 A"/>
    <property type="chains" value="A/B/C/D=1-310"/>
</dbReference>
<dbReference type="PDBsum" id="6JP9"/>
<dbReference type="SMR" id="Q58531"/>
<dbReference type="FunCoup" id="Q58531">
    <property type="interactions" value="222"/>
</dbReference>
<dbReference type="STRING" id="243232.MJ_1131"/>
<dbReference type="PaxDb" id="243232-MJ_1131"/>
<dbReference type="EnsemblBacteria" id="AAB99133">
    <property type="protein sequence ID" value="AAB99133"/>
    <property type="gene ID" value="MJ_1131"/>
</dbReference>
<dbReference type="GeneID" id="1452027"/>
<dbReference type="KEGG" id="mja:MJ_1131"/>
<dbReference type="eggNOG" id="arCOG00085">
    <property type="taxonomic scope" value="Archaea"/>
</dbReference>
<dbReference type="HOGENOM" id="CLU_014340_0_0_2"/>
<dbReference type="InParanoid" id="Q58531"/>
<dbReference type="OrthoDB" id="33844at2157"/>
<dbReference type="PhylomeDB" id="Q58531"/>
<dbReference type="UniPathway" id="UPA00189">
    <property type="reaction ID" value="UER00296"/>
</dbReference>
<dbReference type="Proteomes" id="UP000000805">
    <property type="component" value="Chromosome"/>
</dbReference>
<dbReference type="GO" id="GO:0005829">
    <property type="term" value="C:cytosol"/>
    <property type="evidence" value="ECO:0000318"/>
    <property type="project" value="GO_Central"/>
</dbReference>
<dbReference type="GO" id="GO:0005524">
    <property type="term" value="F:ATP binding"/>
    <property type="evidence" value="ECO:0007669"/>
    <property type="project" value="UniProtKB-UniRule"/>
</dbReference>
<dbReference type="GO" id="GO:0003921">
    <property type="term" value="F:GMP synthase activity"/>
    <property type="evidence" value="ECO:0000318"/>
    <property type="project" value="GO_Central"/>
</dbReference>
<dbReference type="GO" id="GO:0006177">
    <property type="term" value="P:GMP biosynthetic process"/>
    <property type="evidence" value="ECO:0000318"/>
    <property type="project" value="GO_Central"/>
</dbReference>
<dbReference type="CDD" id="cd01997">
    <property type="entry name" value="GMP_synthase_C"/>
    <property type="match status" value="1"/>
</dbReference>
<dbReference type="FunFam" id="3.30.300.10:FF:000002">
    <property type="entry name" value="GMP synthase [glutamine-hydrolyzing]"/>
    <property type="match status" value="1"/>
</dbReference>
<dbReference type="FunFam" id="3.40.50.620:FF:000208">
    <property type="entry name" value="GMP synthase [glutamine-hydrolyzing] subunit B"/>
    <property type="match status" value="1"/>
</dbReference>
<dbReference type="Gene3D" id="3.30.300.10">
    <property type="match status" value="1"/>
</dbReference>
<dbReference type="Gene3D" id="3.40.50.620">
    <property type="entry name" value="HUPs"/>
    <property type="match status" value="1"/>
</dbReference>
<dbReference type="HAMAP" id="MF_00345">
    <property type="entry name" value="GMP_synthase_B"/>
    <property type="match status" value="1"/>
</dbReference>
<dbReference type="InterPro" id="IPR001674">
    <property type="entry name" value="GMP_synth_C"/>
</dbReference>
<dbReference type="InterPro" id="IPR026598">
    <property type="entry name" value="GMP_synthase_B"/>
</dbReference>
<dbReference type="InterPro" id="IPR025777">
    <property type="entry name" value="GMPS_ATP_PPase_dom"/>
</dbReference>
<dbReference type="InterPro" id="IPR022310">
    <property type="entry name" value="NAD/GMP_synthase"/>
</dbReference>
<dbReference type="InterPro" id="IPR014729">
    <property type="entry name" value="Rossmann-like_a/b/a_fold"/>
</dbReference>
<dbReference type="NCBIfam" id="TIGR00884">
    <property type="entry name" value="guaA_Cterm"/>
    <property type="match status" value="1"/>
</dbReference>
<dbReference type="NCBIfam" id="NF000848">
    <property type="entry name" value="PRK00074.1"/>
    <property type="match status" value="1"/>
</dbReference>
<dbReference type="PANTHER" id="PTHR11922:SF2">
    <property type="entry name" value="GMP SYNTHASE [GLUTAMINE-HYDROLYZING]"/>
    <property type="match status" value="1"/>
</dbReference>
<dbReference type="PANTHER" id="PTHR11922">
    <property type="entry name" value="GMP SYNTHASE-RELATED"/>
    <property type="match status" value="1"/>
</dbReference>
<dbReference type="Pfam" id="PF00958">
    <property type="entry name" value="GMP_synt_C"/>
    <property type="match status" value="1"/>
</dbReference>
<dbReference type="Pfam" id="PF02540">
    <property type="entry name" value="NAD_synthase"/>
    <property type="match status" value="1"/>
</dbReference>
<dbReference type="SUPFAM" id="SSF52402">
    <property type="entry name" value="Adenine nucleotide alpha hydrolases-like"/>
    <property type="match status" value="1"/>
</dbReference>
<dbReference type="PROSITE" id="PS51553">
    <property type="entry name" value="GMPS_ATP_PPASE"/>
    <property type="match status" value="1"/>
</dbReference>
<evidence type="ECO:0000250" key="1"/>
<evidence type="ECO:0000305" key="2"/>
<evidence type="ECO:0007829" key="3">
    <source>
        <dbReference type="PDB" id="6JP9"/>
    </source>
</evidence>
<name>GUAAB_METJA</name>
<gene>
    <name type="primary">guaAB</name>
    <name type="ordered locus">MJ1131</name>
</gene>
<proteinExistence type="evidence at protein level"/>
<protein>
    <recommendedName>
        <fullName>GMP synthase [glutamine-hydrolyzing] subunit B</fullName>
        <ecNumber>6.3.5.2</ecNumber>
    </recommendedName>
    <alternativeName>
        <fullName>GMP synthetase</fullName>
    </alternativeName>
</protein>
<feature type="chain" id="PRO_0000140241" description="GMP synthase [glutamine-hydrolyzing] subunit B">
    <location>
        <begin position="1"/>
        <end position="310"/>
    </location>
</feature>
<feature type="domain" description="GMPS ATP-PPase">
    <location>
        <begin position="2"/>
        <end position="185"/>
    </location>
</feature>
<feature type="binding site" evidence="1">
    <location>
        <begin position="29"/>
        <end position="35"/>
    </location>
    <ligand>
        <name>ATP</name>
        <dbReference type="ChEBI" id="CHEBI:30616"/>
    </ligand>
</feature>
<feature type="helix" evidence="3">
    <location>
        <begin position="4"/>
        <end position="19"/>
    </location>
</feature>
<feature type="strand" evidence="3">
    <location>
        <begin position="24"/>
        <end position="27"/>
    </location>
</feature>
<feature type="helix" evidence="3">
    <location>
        <begin position="32"/>
        <end position="45"/>
    </location>
</feature>
<feature type="helix" evidence="3">
    <location>
        <begin position="46"/>
        <end position="48"/>
    </location>
</feature>
<feature type="strand" evidence="3">
    <location>
        <begin position="49"/>
        <end position="55"/>
    </location>
</feature>
<feature type="helix" evidence="3">
    <location>
        <begin position="63"/>
        <end position="71"/>
    </location>
</feature>
<feature type="turn" evidence="3">
    <location>
        <begin position="72"/>
        <end position="75"/>
    </location>
</feature>
<feature type="strand" evidence="3">
    <location>
        <begin position="78"/>
        <end position="83"/>
    </location>
</feature>
<feature type="helix" evidence="3">
    <location>
        <begin position="85"/>
        <end position="92"/>
    </location>
</feature>
<feature type="helix" evidence="3">
    <location>
        <begin position="98"/>
        <end position="119"/>
    </location>
</feature>
<feature type="strand" evidence="3">
    <location>
        <begin position="124"/>
        <end position="126"/>
    </location>
</feature>
<feature type="strand" evidence="3">
    <location>
        <begin position="146"/>
        <end position="148"/>
    </location>
</feature>
<feature type="strand" evidence="3">
    <location>
        <begin position="154"/>
        <end position="158"/>
    </location>
</feature>
<feature type="turn" evidence="3">
    <location>
        <begin position="160"/>
        <end position="163"/>
    </location>
</feature>
<feature type="helix" evidence="3">
    <location>
        <begin position="166"/>
        <end position="175"/>
    </location>
</feature>
<feature type="helix" evidence="3">
    <location>
        <begin position="180"/>
        <end position="183"/>
    </location>
</feature>
<feature type="helix" evidence="3">
    <location>
        <begin position="192"/>
        <end position="196"/>
    </location>
</feature>
<feature type="helix" evidence="3">
    <location>
        <begin position="203"/>
        <end position="222"/>
    </location>
</feature>
<feature type="turn" evidence="3">
    <location>
        <begin position="226"/>
        <end position="228"/>
    </location>
</feature>
<feature type="strand" evidence="3">
    <location>
        <begin position="230"/>
        <end position="243"/>
    </location>
</feature>
<feature type="strand" evidence="3">
    <location>
        <begin position="250"/>
        <end position="264"/>
    </location>
</feature>
<feature type="strand" evidence="3">
    <location>
        <begin position="267"/>
        <end position="269"/>
    </location>
</feature>
<feature type="helix" evidence="3">
    <location>
        <begin position="275"/>
        <end position="288"/>
    </location>
</feature>
<feature type="strand" evidence="3">
    <location>
        <begin position="292"/>
        <end position="298"/>
    </location>
</feature>